<protein>
    <recommendedName>
        <fullName evidence="1">GMP reductase</fullName>
        <ecNumber evidence="1">1.7.1.7</ecNumber>
    </recommendedName>
    <alternativeName>
        <fullName evidence="1">Guanosine 5'-monophosphate oxidoreductase</fullName>
        <shortName evidence="1">Guanosine monophosphate reductase</shortName>
    </alternativeName>
</protein>
<sequence>MFNDIPVFDYEDIQLIPNKCIISSRSQADTSVKLGNYTFKLPVIPANMQTIIDEEVAETLACEGYFYIMHRFNEEERKPFIKRMHDKGLIASISVGVKDYEYDFVTSLKEDAPEFITIDIAHGHSNSVIEMIQHIKQELPETFVIAGNVGTPEAVRELENAGADATKVGIGPGKVCITKVKTGFGTGGWQLAALRWCSKAARKPIIADGGIRTHGDIAKSIRFGASMVMIGSLFAGHLESPGKLVEVDGQQFKEYYGSASEYQKGEHKNVEGKKILLPVKGRLEDTLTEMQQDLQSSISYAGGKELDSLRHVDYVIVKNSIWNGDSI</sequence>
<organism>
    <name type="scientific">Streptococcus agalactiae serotype III (strain NEM316)</name>
    <dbReference type="NCBI Taxonomy" id="211110"/>
    <lineage>
        <taxon>Bacteria</taxon>
        <taxon>Bacillati</taxon>
        <taxon>Bacillota</taxon>
        <taxon>Bacilli</taxon>
        <taxon>Lactobacillales</taxon>
        <taxon>Streptococcaceae</taxon>
        <taxon>Streptococcus</taxon>
    </lineage>
</organism>
<reference key="1">
    <citation type="journal article" date="2002" name="Mol. Microbiol.">
        <title>Genome sequence of Streptococcus agalactiae, a pathogen causing invasive neonatal disease.</title>
        <authorList>
            <person name="Glaser P."/>
            <person name="Rusniok C."/>
            <person name="Buchrieser C."/>
            <person name="Chevalier F."/>
            <person name="Frangeul L."/>
            <person name="Msadek T."/>
            <person name="Zouine M."/>
            <person name="Couve E."/>
            <person name="Lalioui L."/>
            <person name="Poyart C."/>
            <person name="Trieu-Cuot P."/>
            <person name="Kunst F."/>
        </authorList>
    </citation>
    <scope>NUCLEOTIDE SEQUENCE [LARGE SCALE GENOMIC DNA]</scope>
    <source>
        <strain>NEM316</strain>
    </source>
</reference>
<comment type="function">
    <text evidence="1">Catalyzes the irreversible NADPH-dependent deamination of GMP to IMP. It functions in the conversion of nucleobase, nucleoside and nucleotide derivatives of G to A nucleotides, and in maintaining the intracellular balance of A and G nucleotides.</text>
</comment>
<comment type="catalytic activity">
    <reaction evidence="1">
        <text>IMP + NH4(+) + NADP(+) = GMP + NADPH + 2 H(+)</text>
        <dbReference type="Rhea" id="RHEA:17185"/>
        <dbReference type="ChEBI" id="CHEBI:15378"/>
        <dbReference type="ChEBI" id="CHEBI:28938"/>
        <dbReference type="ChEBI" id="CHEBI:57783"/>
        <dbReference type="ChEBI" id="CHEBI:58053"/>
        <dbReference type="ChEBI" id="CHEBI:58115"/>
        <dbReference type="ChEBI" id="CHEBI:58349"/>
        <dbReference type="EC" id="1.7.1.7"/>
    </reaction>
</comment>
<comment type="similarity">
    <text evidence="1">Belongs to the IMPDH/GMPR family. GuaC type 2 subfamily.</text>
</comment>
<evidence type="ECO:0000255" key="1">
    <source>
        <dbReference type="HAMAP-Rule" id="MF_01511"/>
    </source>
</evidence>
<accession>Q8E578</accession>
<gene>
    <name evidence="1" type="primary">guaC</name>
    <name type="ordered locus">gbs1154</name>
</gene>
<feature type="chain" id="PRO_0000093773" description="GMP reductase">
    <location>
        <begin position="1"/>
        <end position="327"/>
    </location>
</feature>
<feature type="active site" description="Thioimidate intermediate" evidence="1">
    <location>
        <position position="176"/>
    </location>
</feature>
<feature type="binding site" evidence="1">
    <location>
        <begin position="205"/>
        <end position="228"/>
    </location>
    <ligand>
        <name>NADP(+)</name>
        <dbReference type="ChEBI" id="CHEBI:58349"/>
    </ligand>
</feature>
<name>GUAC_STRA3</name>
<keyword id="KW-0521">NADP</keyword>
<keyword id="KW-0560">Oxidoreductase</keyword>
<proteinExistence type="inferred from homology"/>
<dbReference type="EC" id="1.7.1.7" evidence="1"/>
<dbReference type="EMBL" id="AL766849">
    <property type="protein sequence ID" value="CAD46813.1"/>
    <property type="molecule type" value="Genomic_DNA"/>
</dbReference>
<dbReference type="RefSeq" id="WP_000481327.1">
    <property type="nucleotide sequence ID" value="NC_004368.1"/>
</dbReference>
<dbReference type="SMR" id="Q8E578"/>
<dbReference type="KEGG" id="san:gbs1154"/>
<dbReference type="eggNOG" id="COG0516">
    <property type="taxonomic scope" value="Bacteria"/>
</dbReference>
<dbReference type="HOGENOM" id="CLU_022552_5_0_9"/>
<dbReference type="Proteomes" id="UP000000823">
    <property type="component" value="Chromosome"/>
</dbReference>
<dbReference type="GO" id="GO:0005829">
    <property type="term" value="C:cytosol"/>
    <property type="evidence" value="ECO:0007669"/>
    <property type="project" value="TreeGrafter"/>
</dbReference>
<dbReference type="GO" id="GO:1902560">
    <property type="term" value="C:GMP reductase complex"/>
    <property type="evidence" value="ECO:0007669"/>
    <property type="project" value="InterPro"/>
</dbReference>
<dbReference type="GO" id="GO:0003920">
    <property type="term" value="F:GMP reductase activity"/>
    <property type="evidence" value="ECO:0007669"/>
    <property type="project" value="UniProtKB-UniRule"/>
</dbReference>
<dbReference type="GO" id="GO:0006163">
    <property type="term" value="P:purine nucleotide metabolic process"/>
    <property type="evidence" value="ECO:0007669"/>
    <property type="project" value="UniProtKB-UniRule"/>
</dbReference>
<dbReference type="CDD" id="cd00381">
    <property type="entry name" value="IMPDH"/>
    <property type="match status" value="1"/>
</dbReference>
<dbReference type="FunFam" id="3.20.20.70:FF:000424">
    <property type="entry name" value="Inosine-5'-monophosphate dehydrogenase 2"/>
    <property type="match status" value="1"/>
</dbReference>
<dbReference type="Gene3D" id="3.20.20.70">
    <property type="entry name" value="Aldolase class I"/>
    <property type="match status" value="1"/>
</dbReference>
<dbReference type="HAMAP" id="MF_01511">
    <property type="entry name" value="GMP_reduct_type2"/>
    <property type="match status" value="1"/>
</dbReference>
<dbReference type="InterPro" id="IPR013785">
    <property type="entry name" value="Aldolase_TIM"/>
</dbReference>
<dbReference type="InterPro" id="IPR050139">
    <property type="entry name" value="GMP_reductase"/>
</dbReference>
<dbReference type="InterPro" id="IPR005994">
    <property type="entry name" value="GuaC_type_2"/>
</dbReference>
<dbReference type="InterPro" id="IPR015875">
    <property type="entry name" value="IMP_DH/GMP_Rdtase_CS"/>
</dbReference>
<dbReference type="InterPro" id="IPR001093">
    <property type="entry name" value="IMP_DH_GMPRt"/>
</dbReference>
<dbReference type="NCBIfam" id="TIGR01306">
    <property type="entry name" value="GMP_reduct_2"/>
    <property type="match status" value="1"/>
</dbReference>
<dbReference type="NCBIfam" id="NF003966">
    <property type="entry name" value="PRK05458.1"/>
    <property type="match status" value="1"/>
</dbReference>
<dbReference type="PANTHER" id="PTHR43170">
    <property type="entry name" value="GMP REDUCTASE"/>
    <property type="match status" value="1"/>
</dbReference>
<dbReference type="PANTHER" id="PTHR43170:SF5">
    <property type="entry name" value="GMP REDUCTASE"/>
    <property type="match status" value="1"/>
</dbReference>
<dbReference type="Pfam" id="PF00478">
    <property type="entry name" value="IMPDH"/>
    <property type="match status" value="1"/>
</dbReference>
<dbReference type="PIRSF" id="PIRSF036500">
    <property type="entry name" value="GMP_red_Firmic"/>
    <property type="match status" value="1"/>
</dbReference>
<dbReference type="SMART" id="SM01240">
    <property type="entry name" value="IMPDH"/>
    <property type="match status" value="1"/>
</dbReference>
<dbReference type="SUPFAM" id="SSF51412">
    <property type="entry name" value="Inosine monophosphate dehydrogenase (IMPDH)"/>
    <property type="match status" value="1"/>
</dbReference>
<dbReference type="PROSITE" id="PS00487">
    <property type="entry name" value="IMP_DH_GMP_RED"/>
    <property type="match status" value="1"/>
</dbReference>